<gene>
    <name evidence="21" type="primary">pgl-3</name>
    <name evidence="21" type="ORF">C18G1.4</name>
</gene>
<proteinExistence type="evidence at protein level"/>
<reference evidence="15" key="1">
    <citation type="journal article" date="2004" name="Genetics">
        <title>The PGL family proteins associate with germ granules and function redundantly in Caenorhabditis elegans germline development.</title>
        <authorList>
            <person name="Kawasaki I."/>
            <person name="Amiri A."/>
            <person name="Fan Y."/>
            <person name="Meyer N."/>
            <person name="Dunkelbarger S."/>
            <person name="Motohashi T."/>
            <person name="Karashima T."/>
            <person name="Bossinger O."/>
            <person name="Strome S."/>
        </authorList>
    </citation>
    <scope>NUCLEOTIDE SEQUENCE [MRNA]</scope>
    <scope>FUNCTION</scope>
    <scope>INTERACTION WITH PGL-1 AND PGL-2</scope>
    <scope>SUBCELLULAR LOCATION</scope>
    <scope>TISSUE SPECIFICITY</scope>
    <scope>DEVELOPMENTAL STAGE</scope>
    <scope>DOMAIN</scope>
    <scope>DISRUPTION PHENOTYPE</scope>
</reference>
<reference evidence="20" key="2">
    <citation type="journal article" date="1998" name="Science">
        <title>Genome sequence of the nematode C. elegans: a platform for investigating biology.</title>
        <authorList>
            <consortium name="The C. elegans sequencing consortium"/>
        </authorList>
    </citation>
    <scope>NUCLEOTIDE SEQUENCE [LARGE SCALE GENOMIC DNA]</scope>
    <source>
        <strain evidence="20">Bristol N2</strain>
    </source>
</reference>
<reference evidence="15" key="3">
    <citation type="journal article" date="2009" name="Autophagy">
        <title>Selective autophagic degradation of maternally-loaded germline P granule components in somatic cells during C. elegans embryogenesis.</title>
        <authorList>
            <person name="Zhao Y."/>
            <person name="Tian E."/>
            <person name="Zhang H."/>
        </authorList>
    </citation>
    <scope>FUNCTION</scope>
    <scope>SUBCELLULAR LOCATION</scope>
</reference>
<reference evidence="15" key="4">
    <citation type="journal article" date="2009" name="Cell">
        <title>SEPA-1 mediates the specific recognition and degradation of P granule components by autophagy in C. elegans.</title>
        <authorList>
            <person name="Zhang Y."/>
            <person name="Yan L."/>
            <person name="Zhou Z."/>
            <person name="Yang P."/>
            <person name="Tian E."/>
            <person name="Zhang K."/>
            <person name="Zhao Y."/>
            <person name="Li Z."/>
            <person name="Song B."/>
            <person name="Han J."/>
            <person name="Miao L."/>
            <person name="Zhang H."/>
        </authorList>
    </citation>
    <scope>FUNCTION</scope>
    <scope>INTERACTION WITH SEPA-1</scope>
    <scope>SUBCELLULAR LOCATION</scope>
    <scope>DEVELOPMENTAL STAGE</scope>
    <scope>DISRUPTION PHENOTYPE</scope>
</reference>
<reference evidence="15" key="5">
    <citation type="journal article" date="2011" name="J. Cell Biol.">
        <title>PGL proteins self associate and bind RNPs to mediate germ granule assembly in C. elegans.</title>
        <authorList>
            <person name="Hanazawa M."/>
            <person name="Yonetani M."/>
            <person name="Sugimoto A."/>
        </authorList>
    </citation>
    <scope>FUNCTION</scope>
    <scope>SUBUNIT</scope>
    <scope>SUBCELLULAR LOCATION</scope>
    <scope>DOMAIN</scope>
    <scope>DISRUPTION PHENOTYPE</scope>
    <scope>MUTAGENESIS OF 633-GLY--GLY-692</scope>
</reference>
<reference evidence="15" key="6">
    <citation type="journal article" date="2013" name="Mol. Cell">
        <title>Arginine methylation modulates autophagic degradation of PGL granules in C. elegans.</title>
        <authorList>
            <person name="Li S."/>
            <person name="Yang P."/>
            <person name="Tian E."/>
            <person name="Zhang H."/>
        </authorList>
    </citation>
    <scope>FUNCTION</scope>
    <scope>INTERACTION WITH PRMT-1 AND SEPA-1</scope>
    <scope>SUBCELLULAR LOCATION</scope>
    <scope>METHYLATION</scope>
    <scope>MUTAGENESIS OF ARG-641; ARG-650; ARG-658; ARG-661; ARG-665; ARG-668; ARG-676; ARG-682 AND ARG-690</scope>
</reference>
<reference evidence="15" key="7">
    <citation type="journal article" date="2014" name="Curr. Biol.">
        <title>Germ-granule components prevent somatic development in the C. elegans germline.</title>
        <authorList>
            <person name="Updike D.L."/>
            <person name="Knutson A.K."/>
            <person name="Egelhofer T.A."/>
            <person name="Campbell A.C."/>
            <person name="Strome S."/>
        </authorList>
    </citation>
    <scope>FUNCTION</scope>
    <scope>DISRUPTION PHENOTYPE</scope>
</reference>
<reference evidence="15" key="8">
    <citation type="journal article" date="2016" name="Cell">
        <title>Polar positioning of phase-separated liquid compartments in cells regulated by an mRNA competition mechanism.</title>
        <authorList>
            <person name="Saha S."/>
            <person name="Weber C.A."/>
            <person name="Nousch M."/>
            <person name="Adame-Arana O."/>
            <person name="Hoege C."/>
            <person name="Hein M.Y."/>
            <person name="Osborne-Nishimura E."/>
            <person name="Mahamid J."/>
            <person name="Jahnel M."/>
            <person name="Jawerth L."/>
            <person name="Pozniakovski A."/>
            <person name="Eckmann C.R."/>
            <person name="Juelicher F."/>
            <person name="Hyman A.A."/>
        </authorList>
    </citation>
    <scope>IDENTIFICATION BY MASS SPECTROMETRY</scope>
    <scope>FUNCTION</scope>
    <scope>SUBCELLULAR LOCATION</scope>
    <scope>DOMAIN</scope>
    <scope>MUTAGENESIS OF ARG-634; ARG-638; ARG-650; ARG-661; ARG-665 AND ARG-690</scope>
</reference>
<reference evidence="15" key="9">
    <citation type="journal article" date="2016" name="J. Cell Sci.">
        <title>Loss of PGL-1 and PGL-3, members of a family of constitutive germ-granule components, promotes germline apoptosis in C. elegans.</title>
        <authorList>
            <person name="Min H."/>
            <person name="Shim Y.H."/>
            <person name="Kawasaki I."/>
        </authorList>
    </citation>
    <scope>FUNCTION</scope>
    <scope>SUBCELLULAR LOCATION</scope>
    <scope>DISRUPTION PHENOTYPE</scope>
</reference>
<reference evidence="15" key="10">
    <citation type="journal article" date="2016" name="Proc. Natl. Acad. Sci. U.S.A.">
        <title>PGL germ granule assembly protein is a base-specific, single-stranded RNase.</title>
        <authorList>
            <person name="Aoki S.T."/>
            <person name="Kershner A.M."/>
            <person name="Bingman C.A."/>
            <person name="Wickens M."/>
            <person name="Kimble J."/>
        </authorList>
    </citation>
    <scope>FUNCTION</scope>
    <scope>CATALYTIC ACTIVITY</scope>
    <scope>SUBUNIT</scope>
    <scope>DOMAIN</scope>
</reference>
<reference evidence="15" key="11">
    <citation type="journal article" date="2016" name="Sci. Rep.">
        <title>Somatically expressed germ-granule components, PGL-1 and PGL-3, repress programmed cell death in C. elegans.</title>
        <authorList>
            <person name="Al-Amin M."/>
            <person name="Min H."/>
            <person name="Shim Y.H."/>
            <person name="Kawasaki I."/>
        </authorList>
    </citation>
    <scope>FUNCTION</scope>
    <scope>SUBCELLULAR LOCATION</scope>
    <scope>TISSUE SPECIFICITY</scope>
    <scope>DEVELOPMENTAL STAGE</scope>
    <scope>DISRUPTION PHENOTYPE</scope>
</reference>
<reference evidence="15" key="12">
    <citation type="journal article" date="2017" name="Autophagy">
        <title>The composition of a protein aggregate modulates the specificity and efficiency of its autophagic degradation.</title>
        <authorList>
            <person name="Zhang G."/>
            <person name="Lin L."/>
            <person name="Qi D."/>
            <person name="Zhang H."/>
        </authorList>
    </citation>
    <scope>FUNCTION</scope>
    <scope>SUBCELLULAR LOCATION</scope>
    <scope>DEVELOPMENTAL STAGE</scope>
</reference>
<sequence length="693" mass="74845">MEANKRQIVEVDGIKSYFFPHLAHYLASNDELLVNNIAQANKLAAFVLGATDKRPSNEEIAEMILPNDSSAYVLAAGMDVCLILGDDFRPKFDSGAEKLSQLGQAHDLAPIIDDEKKISMLARKTKLKKSNDAKILQVLLKVLGAEEAEEKFVELSELSSALDLDFDVYVLAKLLGFASEELQEEIEIIRDNVTDAFEACKPLLKKLMIEGPKIDSVDPFTQLLLTPQEESIEKAVSHIVARFEEASAVEDDESLVLKSQLGYQLIFLVVRSLADGKRDASRTIQSLMPSSVRAEVFPGLQRSVFKSAVFLASHIIQVFLGSMKSFEDWAFVGLAEDLESTWRRRAIAELLKKFRISVLEQCFSQPIPLLPQSELNNETVIENVNNALQFALWITEFYGSESEKKSLNQLQFLSPKSKNLLVDSFKKFAQGLDSKDHVNRIIESLEKSSSSEPSATAKQTTTSNGPTTVSTAAQVVTVEKMPFSRQTIPCEGTDLANVLNSAKIIGESVTVAAHDVIPEKLNAEKNDNTPSTASPVQFSSDGWDSPTKSVALPPKISTLEEEQEEDTTITKVSPQPQERTGTAWGSGDATPVPLATPVNEYKVSGFGAAPVASGFGQFASSNGTSGRGSYGGGRGGDRGGRGAYGGDRGRGGSGDGSRGYRGGDRGGRGSYGEGSRGYQGGRAGFFGGSRGGS</sequence>
<accession>G5EBV6</accession>
<accession>Q965J2</accession>
<dbReference type="EC" id="4.6.1.24" evidence="10"/>
<dbReference type="EMBL" id="AB120729">
    <property type="protein sequence ID" value="BAC87886.1"/>
    <property type="molecule type" value="mRNA"/>
</dbReference>
<dbReference type="EMBL" id="BX284605">
    <property type="protein sequence ID" value="CCD65226.1"/>
    <property type="molecule type" value="Genomic_DNA"/>
</dbReference>
<dbReference type="EMBL" id="BX284605">
    <property type="protein sequence ID" value="CCD65227.1"/>
    <property type="molecule type" value="Genomic_DNA"/>
</dbReference>
<dbReference type="PIR" id="T33251">
    <property type="entry name" value="T33251"/>
</dbReference>
<dbReference type="RefSeq" id="NP_504278.1">
    <molecule id="G5EBV6-1"/>
    <property type="nucleotide sequence ID" value="NM_071877.7"/>
</dbReference>
<dbReference type="RefSeq" id="NP_504279.1">
    <molecule id="G5EBV6-2"/>
    <property type="nucleotide sequence ID" value="NM_071878.5"/>
</dbReference>
<dbReference type="SMR" id="G5EBV6"/>
<dbReference type="FunCoup" id="G5EBV6">
    <property type="interactions" value="150"/>
</dbReference>
<dbReference type="IntAct" id="G5EBV6">
    <property type="interactions" value="1"/>
</dbReference>
<dbReference type="STRING" id="6239.C18G1.4a.1"/>
<dbReference type="PaxDb" id="6239-C18G1.4a"/>
<dbReference type="PeptideAtlas" id="G5EBV6"/>
<dbReference type="EnsemblMetazoa" id="C18G1.4a.1">
    <molecule id="G5EBV6-1"/>
    <property type="protein sequence ID" value="C18G1.4a.1"/>
    <property type="gene ID" value="WBGene00003994"/>
</dbReference>
<dbReference type="EnsemblMetazoa" id="C18G1.4b.1">
    <molecule id="G5EBV6-2"/>
    <property type="protein sequence ID" value="C18G1.4b.1"/>
    <property type="gene ID" value="WBGene00003994"/>
</dbReference>
<dbReference type="GeneID" id="178867"/>
<dbReference type="KEGG" id="cel:CELE_C18G1.4"/>
<dbReference type="UCSC" id="C18G1.4a">
    <property type="organism name" value="c. elegans"/>
</dbReference>
<dbReference type="AGR" id="WB:WBGene00003994"/>
<dbReference type="CTD" id="178867"/>
<dbReference type="WormBase" id="C18G1.4a">
    <molecule id="G5EBV6-1"/>
    <property type="protein sequence ID" value="CE17420"/>
    <property type="gene ID" value="WBGene00003994"/>
    <property type="gene designation" value="pgl-3"/>
</dbReference>
<dbReference type="WormBase" id="C18G1.4b">
    <molecule id="G5EBV6-2"/>
    <property type="protein sequence ID" value="CE27717"/>
    <property type="gene ID" value="WBGene00003994"/>
    <property type="gene designation" value="pgl-3"/>
</dbReference>
<dbReference type="eggNOG" id="ENOG502QVYU">
    <property type="taxonomic scope" value="Eukaryota"/>
</dbReference>
<dbReference type="GeneTree" id="ENSGT00970000196090"/>
<dbReference type="HOGENOM" id="CLU_362575_0_0_1"/>
<dbReference type="InParanoid" id="G5EBV6"/>
<dbReference type="OMA" id="ALWITEF"/>
<dbReference type="OrthoDB" id="5830648at2759"/>
<dbReference type="PhylomeDB" id="G5EBV6"/>
<dbReference type="CD-CODE" id="0F0CDB11">
    <property type="entry name" value="Synthetic Condensate 000073"/>
</dbReference>
<dbReference type="CD-CODE" id="0F455885">
    <property type="entry name" value="Synthetic Condensate 000172"/>
</dbReference>
<dbReference type="CD-CODE" id="73A75392">
    <property type="entry name" value="P-granule"/>
</dbReference>
<dbReference type="CD-CODE" id="75CAE956">
    <property type="entry name" value="Synthetic Condensate 000075"/>
</dbReference>
<dbReference type="CD-CODE" id="7DC50CA0">
    <property type="entry name" value="Synthetic Condensate 000067"/>
</dbReference>
<dbReference type="CD-CODE" id="985E7A25">
    <property type="entry name" value="Synthetic Condensate 000077"/>
</dbReference>
<dbReference type="CD-CODE" id="B30D3E4B">
    <property type="entry name" value="Synthetic Condensate 000234"/>
</dbReference>
<dbReference type="CD-CODE" id="F6300417">
    <property type="entry name" value="Synthetic Condensate 000082"/>
</dbReference>
<dbReference type="PRO" id="PR:G5EBV6"/>
<dbReference type="Proteomes" id="UP000001940">
    <property type="component" value="Chromosome V"/>
</dbReference>
<dbReference type="Bgee" id="WBGene00003994">
    <property type="expression patterns" value="Expressed in adult organism and 3 other cell types or tissues"/>
</dbReference>
<dbReference type="GO" id="GO:0043229">
    <property type="term" value="C:intracellular organelle"/>
    <property type="evidence" value="ECO:0000314"/>
    <property type="project" value="WormBase"/>
</dbReference>
<dbReference type="GO" id="GO:0043186">
    <property type="term" value="C:P granule"/>
    <property type="evidence" value="ECO:0000314"/>
    <property type="project" value="WormBase"/>
</dbReference>
<dbReference type="GO" id="GO:0042802">
    <property type="term" value="F:identical protein binding"/>
    <property type="evidence" value="ECO:0000353"/>
    <property type="project" value="WormBase"/>
</dbReference>
<dbReference type="GO" id="GO:0016829">
    <property type="term" value="F:lyase activity"/>
    <property type="evidence" value="ECO:0007669"/>
    <property type="project" value="UniProtKB-KW"/>
</dbReference>
<dbReference type="GO" id="GO:0046589">
    <property type="term" value="F:ribonuclease T1 activity"/>
    <property type="evidence" value="ECO:0007669"/>
    <property type="project" value="UniProtKB-EC"/>
</dbReference>
<dbReference type="GO" id="GO:0003723">
    <property type="term" value="F:RNA binding"/>
    <property type="evidence" value="ECO:0000250"/>
    <property type="project" value="WormBase"/>
</dbReference>
<dbReference type="GO" id="GO:0004521">
    <property type="term" value="F:RNA endonuclease activity"/>
    <property type="evidence" value="ECO:0000314"/>
    <property type="project" value="WormBase"/>
</dbReference>
<protein>
    <recommendedName>
        <fullName evidence="15">Guanyl-specific ribonuclease pgl-3</fullName>
        <ecNumber evidence="10">4.6.1.24</ecNumber>
    </recommendedName>
    <alternativeName>
        <fullName evidence="21">P granule abnormality protein 3</fullName>
    </alternativeName>
</protein>
<keyword id="KW-0025">Alternative splicing</keyword>
<keyword id="KW-0217">Developmental protein</keyword>
<keyword id="KW-0255">Endonuclease</keyword>
<keyword id="KW-0378">Hydrolase</keyword>
<keyword id="KW-0456">Lyase</keyword>
<keyword id="KW-0488">Methylation</keyword>
<keyword id="KW-0540">Nuclease</keyword>
<keyword id="KW-1185">Reference proteome</keyword>
<keyword id="KW-0694">RNA-binding</keyword>
<evidence type="ECO:0000250" key="1">
    <source>
        <dbReference type="UniProtKB" id="Q9TZQ3"/>
    </source>
</evidence>
<evidence type="ECO:0000256" key="2">
    <source>
        <dbReference type="SAM" id="MobiDB-lite"/>
    </source>
</evidence>
<evidence type="ECO:0000269" key="3">
    <source>
    </source>
</evidence>
<evidence type="ECO:0000269" key="4">
    <source>
    </source>
</evidence>
<evidence type="ECO:0000269" key="5">
    <source>
    </source>
</evidence>
<evidence type="ECO:0000269" key="6">
    <source>
    </source>
</evidence>
<evidence type="ECO:0000269" key="7">
    <source>
    </source>
</evidence>
<evidence type="ECO:0000269" key="8">
    <source>
    </source>
</evidence>
<evidence type="ECO:0000269" key="9">
    <source>
    </source>
</evidence>
<evidence type="ECO:0000269" key="10">
    <source>
    </source>
</evidence>
<evidence type="ECO:0000269" key="11">
    <source>
    </source>
</evidence>
<evidence type="ECO:0000269" key="12">
    <source>
    </source>
</evidence>
<evidence type="ECO:0000269" key="13">
    <source>
    </source>
</evidence>
<evidence type="ECO:0000303" key="14">
    <source>
    </source>
</evidence>
<evidence type="ECO:0000305" key="15"/>
<evidence type="ECO:0000305" key="16">
    <source>
    </source>
</evidence>
<evidence type="ECO:0000305" key="17">
    <source>
    </source>
</evidence>
<evidence type="ECO:0000305" key="18">
    <source>
    </source>
</evidence>
<evidence type="ECO:0000305" key="19">
    <source>
    </source>
</evidence>
<evidence type="ECO:0000312" key="20">
    <source>
        <dbReference type="Proteomes" id="UP000001940"/>
    </source>
</evidence>
<evidence type="ECO:0000312" key="21">
    <source>
        <dbReference type="WormBase" id="C18G1.4a"/>
    </source>
</evidence>
<evidence type="ECO:0000312" key="22">
    <source>
        <dbReference type="WormBase" id="C18G1.4b"/>
    </source>
</evidence>
<feature type="chain" id="PRO_0000443017" description="Guanyl-specific ribonuclease pgl-3" evidence="15">
    <location>
        <begin position="1"/>
        <end position="693"/>
    </location>
</feature>
<feature type="region of interest" description="Involved in dimerization" evidence="10">
    <location>
        <begin position="205"/>
        <end position="447"/>
    </location>
</feature>
<feature type="region of interest" description="Disordered" evidence="2">
    <location>
        <begin position="445"/>
        <end position="468"/>
    </location>
</feature>
<feature type="region of interest" description="Disordered" evidence="2">
    <location>
        <begin position="523"/>
        <end position="591"/>
    </location>
</feature>
<feature type="region of interest" description="Required for interaction with sepa-1" evidence="4">
    <location>
        <begin position="581"/>
        <end position="614"/>
    </location>
</feature>
<feature type="region of interest" description="Disordered" evidence="2">
    <location>
        <begin position="620"/>
        <end position="693"/>
    </location>
</feature>
<feature type="region of interest" description="RNA-binding RGG-box" evidence="11 16">
    <location>
        <begin position="633"/>
        <end position="693"/>
    </location>
</feature>
<feature type="compositionally biased region" description="Low complexity" evidence="2">
    <location>
        <begin position="447"/>
        <end position="468"/>
    </location>
</feature>
<feature type="compositionally biased region" description="Polar residues" evidence="2">
    <location>
        <begin position="528"/>
        <end position="548"/>
    </location>
</feature>
<feature type="compositionally biased region" description="Polar residues" evidence="2">
    <location>
        <begin position="569"/>
        <end position="580"/>
    </location>
</feature>
<feature type="compositionally biased region" description="Gly residues" evidence="2">
    <location>
        <begin position="625"/>
        <end position="634"/>
    </location>
</feature>
<feature type="compositionally biased region" description="Gly residues" evidence="2">
    <location>
        <begin position="641"/>
        <end position="660"/>
    </location>
</feature>
<feature type="compositionally biased region" description="Gly residues" evidence="2">
    <location>
        <begin position="668"/>
        <end position="693"/>
    </location>
</feature>
<feature type="active site" description="Proton acceptor" evidence="1">
    <location>
        <position position="437"/>
    </location>
</feature>
<feature type="splice variant" id="VSP_059308" description="In isoform b." evidence="15">
    <original>MEANKRQIVEVDGIKSYFFPHLAHYLASNDELLVNNIAQANKLAAFVLGATDKRPSNEEIAEMILPNDSSAYVLAAGMDVCLILGDDF</original>
    <variation>MTPVPTCLLLAWTFALFSGMTSL</variation>
    <location>
        <begin position="1"/>
        <end position="88"/>
    </location>
</feature>
<feature type="mutagenesis site" description="No effect on methylation of the RNA-binding RGG-box." evidence="7">
    <original>R</original>
    <variation>A</variation>
    <location>
        <position position="627"/>
    </location>
</feature>
<feature type="mutagenesis site" description="Globular cytoplasmic granules form, but do not contain the P-granule components such as pos-1." evidence="6">
    <location>
        <begin position="633"/>
        <end position="692"/>
    </location>
</feature>
<feature type="mutagenesis site" description="No effect on methylation of the RNA-binding RGG-box." evidence="7">
    <original>R</original>
    <variation>A</variation>
    <location>
        <position position="634"/>
    </location>
</feature>
<feature type="mutagenesis site" description="Abolishes RNA-binding; when associated with G-638; L-650; G-661; G-665 and G-690." evidence="11">
    <original>R</original>
    <variation>L</variation>
    <location>
        <position position="634"/>
    </location>
</feature>
<feature type="mutagenesis site" description="No effect on methylation of the RNA-binding RGG-box." evidence="7">
    <original>R</original>
    <variation>A</variation>
    <location>
        <position position="638"/>
    </location>
</feature>
<feature type="mutagenesis site" description="Abolishes RNA-binding; when associated with L-634; L-650; G-661; G-665 and G-690." evidence="11">
    <original>R</original>
    <variation>G</variation>
    <location>
        <position position="638"/>
    </location>
</feature>
<feature type="mutagenesis site" description="Reduces methylation of the RNA-binding RGG-box. Abolishes methylation of the RNA-binding RGG-box; when associated with A-650; A-658; A-661; A-665; A-668; A-676; A-682 and A-690." evidence="7">
    <original>R</original>
    <variation>A</variation>
    <location>
        <position position="641"/>
    </location>
</feature>
<feature type="mutagenesis site" description="No effect on methylation of the RNA-binding RGG-box." evidence="7">
    <original>R</original>
    <variation>A</variation>
    <location>
        <position position="648"/>
    </location>
</feature>
<feature type="mutagenesis site" description="Reduces methylation of the RNA-binding RGG-box. Abolishes methylation of the RNA-binding RGG-box; when associated with A-641; A-658; A-661; A-665; A-668; A-676; A-682 and A-690." evidence="7">
    <original>R</original>
    <variation>A</variation>
    <location>
        <position position="650"/>
    </location>
</feature>
<feature type="mutagenesis site" description="Abolishes RNA-binding; when associated with L-634; G-638; G-661; G-665 and G-690." evidence="11">
    <original>R</original>
    <variation>L</variation>
    <location>
        <position position="650"/>
    </location>
</feature>
<feature type="mutagenesis site" description="Reduces methylation of the RNA-binding RGG-box. Abolishes methylation of the RNA-binding RGG-box; when associated with A-641; A-650; A-661; A-665; A-668; A-676; A-682 and A-690." evidence="7">
    <original>R</original>
    <variation>A</variation>
    <location>
        <position position="658"/>
    </location>
</feature>
<feature type="mutagenesis site" description="Reduces methylation of the RNA-binding RGG-box. Abolishes methylation of the RNA-binding RGG-box; when associated with A-641; A-650; A-658; A-665; A-668; A-676; A-682 and A-690." evidence="7">
    <original>R</original>
    <variation>A</variation>
    <location>
        <position position="661"/>
    </location>
</feature>
<feature type="mutagenesis site" description="Abolishes RNA-binding; when associated with L-634; G-638; L-650; G-665 and G-690." evidence="11">
    <original>R</original>
    <variation>G</variation>
    <location>
        <position position="661"/>
    </location>
</feature>
<feature type="mutagenesis site" description="Reduces methylation of the RNA-binding RGG-box. Abolishes methylation of the RNA-binding RGG-box; when associated with A-641; A-650; A-658; A-661; A-668; A-676; A-682 and A-690." evidence="7">
    <original>R</original>
    <variation>A</variation>
    <location>
        <position position="665"/>
    </location>
</feature>
<feature type="mutagenesis site" description="Abolishes RNA-binding; when associated with L-634; G-638; L-650; G-661 and G-690." evidence="11">
    <original>R</original>
    <variation>G</variation>
    <location>
        <position position="665"/>
    </location>
</feature>
<feature type="mutagenesis site" description="Reduces methylation of the RNA-binding RGG-box. Abolishes methylation of the RNA-binding RGG-box; when associated with A-641; A-650; A-658; A-661; A-665; A-676; A-682 and A-690." evidence="7">
    <original>R</original>
    <variation>A</variation>
    <location>
        <position position="668"/>
    </location>
</feature>
<feature type="mutagenesis site" description="Reduces methylation of the RNA-binding RGG-box. Abolishes methylation of the RNA-binding RGG-box; when associated with A-641; A-650; A-658; A-661; A-665; A-668; A-682 and A-690." evidence="7">
    <original>R</original>
    <variation>A</variation>
    <location>
        <position position="676"/>
    </location>
</feature>
<feature type="mutagenesis site" description="Reduces methylation of the RNA-binding RGG-box. Abolishes methylation of the RNA-binding RGG-box; when associated with A-641; A-650; A-658; A-661; A-665; A-668; A-676 and A-690." evidence="7">
    <original>R</original>
    <variation>A</variation>
    <location>
        <position position="682"/>
    </location>
</feature>
<feature type="mutagenesis site" description="Reduces methylation of the RNA-binding RGG-box. Abolishes methylation of the RNA-binding RGG-box; when associated with A-641; A-650; A-658; A-661; A-665; A-668; A-676 and A-682." evidence="7">
    <original>R</original>
    <variation>A</variation>
    <location>
        <position position="690"/>
    </location>
</feature>
<feature type="mutagenesis site" description="Abolishes RNA-binding; when associated with L-634; G-638; L-650; G-661 and G-665." evidence="11">
    <original>R</original>
    <variation>G</variation>
    <location>
        <position position="690"/>
    </location>
</feature>
<organism evidence="20">
    <name type="scientific">Caenorhabditis elegans</name>
    <dbReference type="NCBI Taxonomy" id="6239"/>
    <lineage>
        <taxon>Eukaryota</taxon>
        <taxon>Metazoa</taxon>
        <taxon>Ecdysozoa</taxon>
        <taxon>Nematoda</taxon>
        <taxon>Chromadorea</taxon>
        <taxon>Rhabditida</taxon>
        <taxon>Rhabditina</taxon>
        <taxon>Rhabditomorpha</taxon>
        <taxon>Rhabditoidea</taxon>
        <taxon>Rhabditidae</taxon>
        <taxon>Peloderinae</taxon>
        <taxon>Caenorhabditis</taxon>
    </lineage>
</organism>
<name>PGL3_CAEEL</name>
<comment type="function">
    <text evidence="3 4 5 6 7 8 9 10 11 12 13">Guanyl-specific endoribonuclease which cleaves the phosphodiester bond in single-stranded RNA between the 3'-guanylic residue and the 5'-OH residue of adjacent nucleotide, resulting in the formation of a corresponding 2',3'-cyclic phosphate intermediate (PubMed:26787882). P-granule component involved in germline development (PubMed:15238518, PubMed:19372764, PubMed:24746798). Together with the P-granule component pgl-1, is involved in the formation of P-granules (PubMed:21402787, PubMed:24746798, PubMed:27594427). Together with pgl-1, probably recruits other granule components such as pos-1, mex-3 and glh-1, and RNA to P-granules (PubMed:21402787, PubMed:27594427). In vitro, binds mRNA; this interaction is required for the formation of liquid-like droplets that resemble P-granules (PubMed:27594427). Most likely recruits pgl-1 into P-granules during autophagy (PubMed:19167332). Associates with adapters such as sepa-1 and is required for the accumulation and degradation of P-granules by autophagy in somatic cells (PubMed:19167332, PubMed:24140420, PubMed:28806108). This ensures exclusive localization of the P-granules in germ cells (PubMed:19167332, PubMed:28806108). In addition, may act redundantly with pgl-1 to protect germ cells from excessive germline apoptosis during normal oogenesis and development of the two gonadal arms (PubMed:26598553). This may in part be through regulating the localization of sir-2.1 which is involved in germ cell apoptosis (PubMed:26598553). May protect somatic cells from excessive apoptosis during normal development (PubMed:27650246).</text>
</comment>
<comment type="catalytic activity">
    <reaction evidence="10">
        <text>[RNA] containing guanosine + H2O = an [RNA fragment]-3'-guanosine-3'-phosphate + a 5'-hydroxy-ribonucleotide-3'-[RNA fragment].</text>
        <dbReference type="EC" id="4.6.1.24"/>
    </reaction>
</comment>
<comment type="subunit">
    <text evidence="3 4 7 10 14">May form a homodimer (PubMed:21402787, PubMed:26787882). Interacts with pgl-1 and pgl-2; this association is not required for P-granule localization of either pgl-1 or pgl-2 (PubMed:15238518). Interacts with sepa-1; the interaction is enhanced in the presence of RNA (PubMed:19167332, PubMed:24140420). Interacts with prmt-1; the interaction is direct (PubMed:24140420).</text>
</comment>
<comment type="interaction">
    <interactant intactId="EBI-328338">
        <id>G5EBV6</id>
    </interactant>
    <interactant intactId="EBI-2256317">
        <id>G5EC37</id>
        <label>sepa-1</label>
    </interactant>
    <organismsDiffer>false</organismsDiffer>
    <experiments>5</experiments>
</comment>
<comment type="subcellular location">
    <subcellularLocation>
        <location evidence="3 5 6 7 9 11 12 13 17">Cytoplasmic granule</location>
    </subcellularLocation>
    <text evidence="3 5 6 7 12">Localizes to P granules in germ cells at all stages of development except in spermatogenesis (PubMed:15238518). Localizes to the germ precursor cells Z2 and Z3 in embryos (PubMed:19372764, PubMed:24140420, PubMed:27650246). Co-localizes with pgl-1 in P-granules, but localization in P-granules is not dependent on an association with pgl-1 (PubMed:15238518, PubMed:21402787).</text>
</comment>
<comment type="alternative products">
    <event type="alternative splicing"/>
    <isoform>
        <id>G5EBV6-1</id>
        <name evidence="21">a</name>
        <sequence type="displayed"/>
    </isoform>
    <isoform>
        <id>G5EBV6-2</id>
        <name evidence="22">b</name>
        <sequence type="described" ref="VSP_059308"/>
    </isoform>
</comment>
<comment type="tissue specificity">
    <text evidence="3 12">Highly expressed in the germline (PubMed:15238518). Expressed in most somatic cells (PubMed:27650246).</text>
</comment>
<comment type="developmental stage">
    <text evidence="3 4 12 13">Expressed throughout development from embryos to adults (PubMed:15238518, PubMed:27650246). Not expressed in somatic cells of embryos (PubMed:28806108). First expressed in 1-cell embryos, and expression continues until the 24-cell stage (PubMed:15238518). Highly expressed in early stage embryos (PubMed:19167332). Expression decreases after the 24-cell stage and is negligible throughout the rest of embryogenesis and early stages of larval development (PubMed:15238518, PubMed:19167332). During larval development, first expressed in the germline of L3 stage larvae (PubMed:15238518).</text>
</comment>
<comment type="domain">
    <text evidence="18">The dimerization domain also acts as a hinge; changes in its structure probably impact oligomerization and RNA-binding.</text>
</comment>
<comment type="domain">
    <text evidence="6 16 19">The RNA-binding RGG-box is required for the recruitment of some P-granule components such as pos-1 and probably mRNA, but is dispensable for granule formation.</text>
</comment>
<comment type="PTM">
    <text evidence="7">Methylated at arginine residues in the RNA-binding RGG-box by prmt-1. Methylation promotes P-granule degradation by autophagy.</text>
</comment>
<comment type="disruption phenotype">
    <text evidence="3 4 6 8 9 12">Viable, and not temperature sensitive (PubMed:15238518). Failed degradation and diffuse cytoplasmic localization of the P-granule component pgl-1 in the somatic cells of embryos (PubMed:19167332). Increased germ cell apoptosis in gonadal arms, and this is further increased following UV irradiation (PubMed:26598553). Double knockout with pgl-1 results in 37% of progeny arresting as late embryos and 9% as larvae at 26 degrees Celsius (PubMed:15238518). Double knockout with pgl-1 enhances the temperature-sensitive sterility phenotype and germline defects of the pgl-1 single knockout (PubMed:15238518, PubMed:26598553). Germline defects include increased apoptosis in the gonad, fewer germ nuclei, no sperm and no oocytes in the gonad arms (PubMed:15238518, PubMed:26598553). The gonads of the double knockout with pgl-1 degenerate as the adults age (PubMed:15238518). Conversely, double knockout with ced-1 results in reduced somatic cell apoptosis (PubMed:27650246). Triple knockout with pgl-1 and pgl-2 results in 58% of progeny arresting as late embryos and 5% as larvae at 26 degrees Celsius (PubMed:15238518). Triple knockout with pgl-1 and him-3 further reduces the number of self-cross progeny as compared to the pgl-1 and him-3 double mutant and him-3 single mutant (PubMed:15238518). Double RNAi-mediated knockdown with pgl-1 results in a reduced number of pos-1, mex-1 and glh-1 positive granules in embryos (PubMed:21402787). Quadruple RNAi-mediated knockdown with glh-1, glh-4 and pgl-1 results in offspring that display 27-89% sterility, abnormal oocytes and do not have embryos in the uterus (PubMed:24746798). These sterile offspring still produce sperm (PubMed:24746798). Furthermore, these offspring may have compromised P-granule integrity as there is diffuse cytoplasmic localization of the P-granule component deps-1, which may cause germ cells to initiate somatic reprogramming (PubMed:24746798). RNAi-mediated knockdown in a double ced-1 and hpl-2 mutant background rescues the reduced somatic cell apoptotic cell defect in the ced-1 and hpl-2 double knockout at 25 degrees Celsius (PubMed:27650246).</text>
</comment>